<protein>
    <recommendedName>
        <fullName evidence="1">Urease subunit alpha</fullName>
        <ecNumber evidence="1">3.5.1.5</ecNumber>
    </recommendedName>
    <alternativeName>
        <fullName evidence="1">Urea amidohydrolase subunit alpha</fullName>
    </alternativeName>
</protein>
<sequence>MPLKLTRRQYAEMFGPTVGDRVRLADTDLLVEVERDLIAEGGGYGNEIKFGGGKVIRDGMGQSPTARDADSLDLIITNALILDSRLGVIKADLGIKHGLIVGIGHGGNPGIQSGLGSTFVDPRTGKKNPMIVGAATEVIAGEGCIVTAGGIDTHIHFICPQQIEEAISSGITTMLGGGTGPATGTFATTCTPGAWNLRRMIEAAEAYPMNLGFLAKGNCGTPAPLREQVLAGAIGLKLHEDWGTTPAAIDVCLGVADEFDVQVAIHTDTLNEAGFVEATIRAFKGRTIHTFHSEGAGGGHAPDIIRVCGEPNVLPSSTNPTRPFTVNTIDEHLDMLMVCHHLDTKIPEDVAFAESRIRPETIAAEDCLHDLGAISIMSSDSQAMGRVGEVIIRTWQTAHKMKQQFGALAGGAHPAADNFRALRYLAKYTINPAIAQGIAHVVGSLEVGKLADLVLFKPALFGVKPELVLKGGFIAWANMGDPNASIPTPQPTFYRPQFGAAGRALTSTSLTFVSQAALDHGTFRDAGLARRLEPVKHCRRIGKRDMVLNDALPHIEVDPETYTVKADGRVLTCEPARELPMAQRYFLF</sequence>
<keyword id="KW-0963">Cytoplasm</keyword>
<keyword id="KW-0378">Hydrolase</keyword>
<keyword id="KW-0479">Metal-binding</keyword>
<keyword id="KW-0533">Nickel</keyword>
<keyword id="KW-1185">Reference proteome</keyword>
<accession>B1ZP06</accession>
<gene>
    <name evidence="1" type="primary">ureC</name>
    <name type="ordered locus">Oter_4222</name>
</gene>
<comment type="catalytic activity">
    <reaction evidence="1">
        <text>urea + 2 H2O + H(+) = hydrogencarbonate + 2 NH4(+)</text>
        <dbReference type="Rhea" id="RHEA:20557"/>
        <dbReference type="ChEBI" id="CHEBI:15377"/>
        <dbReference type="ChEBI" id="CHEBI:15378"/>
        <dbReference type="ChEBI" id="CHEBI:16199"/>
        <dbReference type="ChEBI" id="CHEBI:17544"/>
        <dbReference type="ChEBI" id="CHEBI:28938"/>
        <dbReference type="EC" id="3.5.1.5"/>
    </reaction>
</comment>
<comment type="cofactor">
    <cofactor evidence="1">
        <name>Ni cation</name>
        <dbReference type="ChEBI" id="CHEBI:25516"/>
    </cofactor>
    <text evidence="1">Binds 2 nickel ions per subunit.</text>
</comment>
<comment type="pathway">
    <text evidence="1">Nitrogen metabolism; urea degradation; CO(2) and NH(3) from urea (urease route): step 1/1.</text>
</comment>
<comment type="subunit">
    <text evidence="1">Heterotrimer of UreA (gamma), UreB (beta) and UreC (alpha) subunits. Three heterotrimers associate to form the active enzyme.</text>
</comment>
<comment type="subcellular location">
    <subcellularLocation>
        <location evidence="1">Cytoplasm</location>
    </subcellularLocation>
</comment>
<comment type="PTM">
    <text evidence="1">Carboxylation allows a single lysine to coordinate two nickel ions.</text>
</comment>
<comment type="similarity">
    <text evidence="1">Belongs to the metallo-dependent hydrolases superfamily. Urease alpha subunit family.</text>
</comment>
<organism>
    <name type="scientific">Opitutus terrae (strain DSM 11246 / JCM 15787 / PB90-1)</name>
    <dbReference type="NCBI Taxonomy" id="452637"/>
    <lineage>
        <taxon>Bacteria</taxon>
        <taxon>Pseudomonadati</taxon>
        <taxon>Verrucomicrobiota</taxon>
        <taxon>Opitutia</taxon>
        <taxon>Opitutales</taxon>
        <taxon>Opitutaceae</taxon>
        <taxon>Opitutus</taxon>
    </lineage>
</organism>
<proteinExistence type="inferred from homology"/>
<name>URE1_OPITP</name>
<dbReference type="EC" id="3.5.1.5" evidence="1"/>
<dbReference type="EMBL" id="CP001032">
    <property type="protein sequence ID" value="ACB77495.1"/>
    <property type="molecule type" value="Genomic_DNA"/>
</dbReference>
<dbReference type="RefSeq" id="WP_012377023.1">
    <property type="nucleotide sequence ID" value="NC_010571.1"/>
</dbReference>
<dbReference type="SMR" id="B1ZP06"/>
<dbReference type="STRING" id="452637.Oter_4222"/>
<dbReference type="KEGG" id="ote:Oter_4222"/>
<dbReference type="eggNOG" id="COG0804">
    <property type="taxonomic scope" value="Bacteria"/>
</dbReference>
<dbReference type="HOGENOM" id="CLU_000980_0_0_0"/>
<dbReference type="UniPathway" id="UPA00258">
    <property type="reaction ID" value="UER00370"/>
</dbReference>
<dbReference type="Proteomes" id="UP000007013">
    <property type="component" value="Chromosome"/>
</dbReference>
<dbReference type="GO" id="GO:0005737">
    <property type="term" value="C:cytoplasm"/>
    <property type="evidence" value="ECO:0007669"/>
    <property type="project" value="UniProtKB-SubCell"/>
</dbReference>
<dbReference type="GO" id="GO:0016151">
    <property type="term" value="F:nickel cation binding"/>
    <property type="evidence" value="ECO:0007669"/>
    <property type="project" value="UniProtKB-UniRule"/>
</dbReference>
<dbReference type="GO" id="GO:0009039">
    <property type="term" value="F:urease activity"/>
    <property type="evidence" value="ECO:0007669"/>
    <property type="project" value="UniProtKB-UniRule"/>
</dbReference>
<dbReference type="GO" id="GO:0043419">
    <property type="term" value="P:urea catabolic process"/>
    <property type="evidence" value="ECO:0007669"/>
    <property type="project" value="UniProtKB-UniRule"/>
</dbReference>
<dbReference type="CDD" id="cd00375">
    <property type="entry name" value="Urease_alpha"/>
    <property type="match status" value="1"/>
</dbReference>
<dbReference type="Gene3D" id="3.20.20.140">
    <property type="entry name" value="Metal-dependent hydrolases"/>
    <property type="match status" value="1"/>
</dbReference>
<dbReference type="Gene3D" id="2.30.40.10">
    <property type="entry name" value="Urease, subunit C, domain 1"/>
    <property type="match status" value="1"/>
</dbReference>
<dbReference type="HAMAP" id="MF_01953">
    <property type="entry name" value="Urease_alpha"/>
    <property type="match status" value="1"/>
</dbReference>
<dbReference type="InterPro" id="IPR006680">
    <property type="entry name" value="Amidohydro-rel"/>
</dbReference>
<dbReference type="InterPro" id="IPR011059">
    <property type="entry name" value="Metal-dep_hydrolase_composite"/>
</dbReference>
<dbReference type="InterPro" id="IPR032466">
    <property type="entry name" value="Metal_Hydrolase"/>
</dbReference>
<dbReference type="InterPro" id="IPR001763">
    <property type="entry name" value="Rhodanese-like_dom"/>
</dbReference>
<dbReference type="InterPro" id="IPR011612">
    <property type="entry name" value="Urease_alpha_N_dom"/>
</dbReference>
<dbReference type="InterPro" id="IPR050112">
    <property type="entry name" value="Urease_alpha_subunit"/>
</dbReference>
<dbReference type="InterPro" id="IPR017950">
    <property type="entry name" value="Urease_AS"/>
</dbReference>
<dbReference type="InterPro" id="IPR005848">
    <property type="entry name" value="Urease_asu"/>
</dbReference>
<dbReference type="InterPro" id="IPR017951">
    <property type="entry name" value="Urease_asu_c"/>
</dbReference>
<dbReference type="InterPro" id="IPR029754">
    <property type="entry name" value="Urease_Ni-bd"/>
</dbReference>
<dbReference type="NCBIfam" id="NF009686">
    <property type="entry name" value="PRK13207.1"/>
    <property type="match status" value="1"/>
</dbReference>
<dbReference type="NCBIfam" id="TIGR01792">
    <property type="entry name" value="urease_alph"/>
    <property type="match status" value="1"/>
</dbReference>
<dbReference type="PANTHER" id="PTHR43440">
    <property type="entry name" value="UREASE"/>
    <property type="match status" value="1"/>
</dbReference>
<dbReference type="PANTHER" id="PTHR43440:SF1">
    <property type="entry name" value="UREASE"/>
    <property type="match status" value="1"/>
</dbReference>
<dbReference type="Pfam" id="PF01979">
    <property type="entry name" value="Amidohydro_1"/>
    <property type="match status" value="1"/>
</dbReference>
<dbReference type="Pfam" id="PF00449">
    <property type="entry name" value="Urease_alpha"/>
    <property type="match status" value="1"/>
</dbReference>
<dbReference type="PRINTS" id="PR01752">
    <property type="entry name" value="UREASE"/>
</dbReference>
<dbReference type="SUPFAM" id="SSF51338">
    <property type="entry name" value="Composite domain of metallo-dependent hydrolases"/>
    <property type="match status" value="1"/>
</dbReference>
<dbReference type="SUPFAM" id="SSF51556">
    <property type="entry name" value="Metallo-dependent hydrolases"/>
    <property type="match status" value="1"/>
</dbReference>
<dbReference type="PROSITE" id="PS01120">
    <property type="entry name" value="UREASE_1"/>
    <property type="match status" value="1"/>
</dbReference>
<dbReference type="PROSITE" id="PS00145">
    <property type="entry name" value="UREASE_2"/>
    <property type="match status" value="1"/>
</dbReference>
<dbReference type="PROSITE" id="PS51368">
    <property type="entry name" value="UREASE_3"/>
    <property type="match status" value="1"/>
</dbReference>
<feature type="chain" id="PRO_1000188887" description="Urease subunit alpha">
    <location>
        <begin position="1"/>
        <end position="588"/>
    </location>
</feature>
<feature type="domain" description="Urease" evidence="1">
    <location>
        <begin position="149"/>
        <end position="588"/>
    </location>
</feature>
<feature type="active site" description="Proton donor" evidence="1">
    <location>
        <position position="340"/>
    </location>
</feature>
<feature type="binding site" evidence="1">
    <location>
        <position position="154"/>
    </location>
    <ligand>
        <name>Ni(2+)</name>
        <dbReference type="ChEBI" id="CHEBI:49786"/>
        <label>1</label>
    </ligand>
</feature>
<feature type="binding site" evidence="1">
    <location>
        <position position="156"/>
    </location>
    <ligand>
        <name>Ni(2+)</name>
        <dbReference type="ChEBI" id="CHEBI:49786"/>
        <label>1</label>
    </ligand>
</feature>
<feature type="binding site" description="via carbamate group" evidence="1">
    <location>
        <position position="237"/>
    </location>
    <ligand>
        <name>Ni(2+)</name>
        <dbReference type="ChEBI" id="CHEBI:49786"/>
        <label>1</label>
    </ligand>
</feature>
<feature type="binding site" description="via carbamate group" evidence="1">
    <location>
        <position position="237"/>
    </location>
    <ligand>
        <name>Ni(2+)</name>
        <dbReference type="ChEBI" id="CHEBI:49786"/>
        <label>2</label>
    </ligand>
</feature>
<feature type="binding site" evidence="1">
    <location>
        <position position="239"/>
    </location>
    <ligand>
        <name>substrate</name>
    </ligand>
</feature>
<feature type="binding site" evidence="1">
    <location>
        <position position="266"/>
    </location>
    <ligand>
        <name>Ni(2+)</name>
        <dbReference type="ChEBI" id="CHEBI:49786"/>
        <label>2</label>
    </ligand>
</feature>
<feature type="binding site" evidence="1">
    <location>
        <position position="292"/>
    </location>
    <ligand>
        <name>Ni(2+)</name>
        <dbReference type="ChEBI" id="CHEBI:49786"/>
        <label>2</label>
    </ligand>
</feature>
<feature type="binding site" evidence="1">
    <location>
        <position position="380"/>
    </location>
    <ligand>
        <name>Ni(2+)</name>
        <dbReference type="ChEBI" id="CHEBI:49786"/>
        <label>1</label>
    </ligand>
</feature>
<feature type="modified residue" description="N6-carboxylysine" evidence="1">
    <location>
        <position position="237"/>
    </location>
</feature>
<evidence type="ECO:0000255" key="1">
    <source>
        <dbReference type="HAMAP-Rule" id="MF_01953"/>
    </source>
</evidence>
<reference key="1">
    <citation type="journal article" date="2011" name="J. Bacteriol.">
        <title>Genome sequence of the verrucomicrobium Opitutus terrae PB90-1, an abundant inhabitant of rice paddy soil ecosystems.</title>
        <authorList>
            <person name="van Passel M.W."/>
            <person name="Kant R."/>
            <person name="Palva A."/>
            <person name="Copeland A."/>
            <person name="Lucas S."/>
            <person name="Lapidus A."/>
            <person name="Glavina del Rio T."/>
            <person name="Pitluck S."/>
            <person name="Goltsman E."/>
            <person name="Clum A."/>
            <person name="Sun H."/>
            <person name="Schmutz J."/>
            <person name="Larimer F.W."/>
            <person name="Land M.L."/>
            <person name="Hauser L."/>
            <person name="Kyrpides N."/>
            <person name="Mikhailova N."/>
            <person name="Richardson P.P."/>
            <person name="Janssen P.H."/>
            <person name="de Vos W.M."/>
            <person name="Smidt H."/>
        </authorList>
    </citation>
    <scope>NUCLEOTIDE SEQUENCE [LARGE SCALE GENOMIC DNA]</scope>
    <source>
        <strain>DSM 11246 / JCM 15787 / PB90-1</strain>
    </source>
</reference>